<dbReference type="EMBL" id="AK017647">
    <property type="protein sequence ID" value="BAB30854.1"/>
    <property type="molecule type" value="mRNA"/>
</dbReference>
<dbReference type="EMBL" id="AK018762">
    <property type="protein sequence ID" value="BAB31392.1"/>
    <property type="molecule type" value="mRNA"/>
</dbReference>
<dbReference type="EMBL" id="AK135127">
    <property type="protein sequence ID" value="BAE22432.1"/>
    <property type="molecule type" value="mRNA"/>
</dbReference>
<dbReference type="EMBL" id="BC043922">
    <property type="protein sequence ID" value="AAH43922.1"/>
    <property type="molecule type" value="mRNA"/>
</dbReference>
<dbReference type="CCDS" id="CCDS39275.1"/>
<dbReference type="RefSeq" id="NP_001404617.1">
    <property type="nucleotide sequence ID" value="NM_001417688.1"/>
</dbReference>
<dbReference type="RefSeq" id="NP_080879.1">
    <property type="nucleotide sequence ID" value="NM_026603.5"/>
</dbReference>
<dbReference type="SMR" id="Q9CQJ6"/>
<dbReference type="BioGRID" id="212709">
    <property type="interactions" value="15"/>
</dbReference>
<dbReference type="FunCoup" id="Q9CQJ6">
    <property type="interactions" value="3391"/>
</dbReference>
<dbReference type="IntAct" id="Q9CQJ6">
    <property type="interactions" value="1"/>
</dbReference>
<dbReference type="MINT" id="Q9CQJ6"/>
<dbReference type="STRING" id="10090.ENSMUSP00000023869"/>
<dbReference type="iPTMnet" id="Q9CQJ6"/>
<dbReference type="PhosphoSitePlus" id="Q9CQJ6"/>
<dbReference type="SwissPalm" id="Q9CQJ6"/>
<dbReference type="jPOST" id="Q9CQJ6"/>
<dbReference type="PaxDb" id="10090-ENSMUSP00000023869"/>
<dbReference type="PeptideAtlas" id="Q9CQJ6"/>
<dbReference type="ProteomicsDB" id="279340"/>
<dbReference type="Pumba" id="Q9CQJ6"/>
<dbReference type="Antibodypedia" id="31699">
    <property type="antibodies" value="198 antibodies from 30 providers"/>
</dbReference>
<dbReference type="DNASU" id="68184"/>
<dbReference type="Ensembl" id="ENSMUST00000023869.15">
    <property type="protein sequence ID" value="ENSMUSP00000023869.9"/>
    <property type="gene ID" value="ENSMUSG00000023106.16"/>
</dbReference>
<dbReference type="GeneID" id="68184"/>
<dbReference type="KEGG" id="mmu:68184"/>
<dbReference type="UCSC" id="uc008zor.1">
    <property type="organism name" value="mouse"/>
</dbReference>
<dbReference type="AGR" id="MGI:1915434"/>
<dbReference type="CTD" id="8562"/>
<dbReference type="MGI" id="MGI:1915434">
    <property type="gene designation" value="Denr"/>
</dbReference>
<dbReference type="VEuPathDB" id="HostDB:ENSMUSG00000023106"/>
<dbReference type="eggNOG" id="KOG3239">
    <property type="taxonomic scope" value="Eukaryota"/>
</dbReference>
<dbReference type="GeneTree" id="ENSGT00390000014349"/>
<dbReference type="HOGENOM" id="CLU_073511_1_0_1"/>
<dbReference type="InParanoid" id="Q9CQJ6"/>
<dbReference type="OMA" id="EVFEIDM"/>
<dbReference type="OrthoDB" id="277199at2759"/>
<dbReference type="PhylomeDB" id="Q9CQJ6"/>
<dbReference type="TreeFam" id="TF105912"/>
<dbReference type="BioGRID-ORCS" id="68184">
    <property type="hits" value="20 hits in 77 CRISPR screens"/>
</dbReference>
<dbReference type="ChiTaRS" id="Denr">
    <property type="organism name" value="mouse"/>
</dbReference>
<dbReference type="PRO" id="PR:Q9CQJ6"/>
<dbReference type="Proteomes" id="UP000000589">
    <property type="component" value="Chromosome 5"/>
</dbReference>
<dbReference type="RNAct" id="Q9CQJ6">
    <property type="molecule type" value="protein"/>
</dbReference>
<dbReference type="Bgee" id="ENSMUSG00000023106">
    <property type="expression patterns" value="Expressed in primitive streak and 252 other cell types or tissues"/>
</dbReference>
<dbReference type="ExpressionAtlas" id="Q9CQJ6">
    <property type="expression patterns" value="baseline and differential"/>
</dbReference>
<dbReference type="GO" id="GO:0005737">
    <property type="term" value="C:cytoplasm"/>
    <property type="evidence" value="ECO:0000250"/>
    <property type="project" value="UniProtKB"/>
</dbReference>
<dbReference type="GO" id="GO:0003743">
    <property type="term" value="F:translation initiation factor activity"/>
    <property type="evidence" value="ECO:0007669"/>
    <property type="project" value="UniProtKB-KW"/>
</dbReference>
<dbReference type="GO" id="GO:0001731">
    <property type="term" value="P:formation of translation preinitiation complex"/>
    <property type="evidence" value="ECO:0007669"/>
    <property type="project" value="Ensembl"/>
</dbReference>
<dbReference type="GO" id="GO:0075522">
    <property type="term" value="P:IRES-dependent viral translational initiation"/>
    <property type="evidence" value="ECO:0007669"/>
    <property type="project" value="Ensembl"/>
</dbReference>
<dbReference type="GO" id="GO:0032790">
    <property type="term" value="P:ribosome disassembly"/>
    <property type="evidence" value="ECO:0007669"/>
    <property type="project" value="Ensembl"/>
</dbReference>
<dbReference type="CDD" id="cd11607">
    <property type="entry name" value="DENR_C"/>
    <property type="match status" value="1"/>
</dbReference>
<dbReference type="FunFam" id="3.30.780.10:FF:000004">
    <property type="entry name" value="density-regulated protein-like"/>
    <property type="match status" value="1"/>
</dbReference>
<dbReference type="Gene3D" id="3.30.780.10">
    <property type="entry name" value="SUI1-like domain"/>
    <property type="match status" value="1"/>
</dbReference>
<dbReference type="InterPro" id="IPR050318">
    <property type="entry name" value="DENR/SUI1_TIF"/>
</dbReference>
<dbReference type="InterPro" id="IPR046447">
    <property type="entry name" value="DENR_C"/>
</dbReference>
<dbReference type="InterPro" id="IPR005873">
    <property type="entry name" value="DENR_eukaryotes"/>
</dbReference>
<dbReference type="InterPro" id="IPR048517">
    <property type="entry name" value="DENR_N"/>
</dbReference>
<dbReference type="InterPro" id="IPR001950">
    <property type="entry name" value="SUI1"/>
</dbReference>
<dbReference type="InterPro" id="IPR036877">
    <property type="entry name" value="SUI1_dom_sf"/>
</dbReference>
<dbReference type="NCBIfam" id="TIGR01159">
    <property type="entry name" value="DRP1"/>
    <property type="match status" value="1"/>
</dbReference>
<dbReference type="PANTHER" id="PTHR12789:SF0">
    <property type="entry name" value="DENSITY-REGULATED PROTEIN"/>
    <property type="match status" value="1"/>
</dbReference>
<dbReference type="PANTHER" id="PTHR12789">
    <property type="entry name" value="DENSITY-REGULATED PROTEIN HOMOLOG"/>
    <property type="match status" value="1"/>
</dbReference>
<dbReference type="Pfam" id="PF21023">
    <property type="entry name" value="DENR_N"/>
    <property type="match status" value="1"/>
</dbReference>
<dbReference type="Pfam" id="PF01253">
    <property type="entry name" value="SUI1"/>
    <property type="match status" value="1"/>
</dbReference>
<dbReference type="SUPFAM" id="SSF55159">
    <property type="entry name" value="eIF1-like"/>
    <property type="match status" value="1"/>
</dbReference>
<dbReference type="PROSITE" id="PS50296">
    <property type="entry name" value="SUI1"/>
    <property type="match status" value="1"/>
</dbReference>
<name>DENR_MOUSE</name>
<keyword id="KW-0007">Acetylation</keyword>
<keyword id="KW-0963">Cytoplasm</keyword>
<keyword id="KW-0396">Initiation factor</keyword>
<keyword id="KW-0597">Phosphoprotein</keyword>
<keyword id="KW-0648">Protein biosynthesis</keyword>
<keyword id="KW-1185">Reference proteome</keyword>
<proteinExistence type="evidence at protein level"/>
<sequence length="198" mass="22166">MATDISESSGADCKGDTKNSAKLDADYPLRVLYCGVCSLPTEYCEYMPDVAKCRQWLEKNFPNEFAKLTVENSPKQETGITEGQGPVGEEEEKKKQKRGGRGQIKQKKKTVPQKVTIAKIPRAKKKYVTRVCGLATFEIDLKEAQRFFAQKFSCGASVTGEDEIIIQGDFTDDIIDVIQEKWPEVDDDSIEDLGEVKK</sequence>
<feature type="initiator methionine" description="Removed" evidence="1">
    <location>
        <position position="1"/>
    </location>
</feature>
<feature type="chain" id="PRO_0000130601" description="Density-regulated protein">
    <location>
        <begin position="2"/>
        <end position="198"/>
    </location>
</feature>
<feature type="domain" description="SUI1" evidence="2">
    <location>
        <begin position="115"/>
        <end position="182"/>
    </location>
</feature>
<feature type="region of interest" description="Disordered" evidence="3">
    <location>
        <begin position="72"/>
        <end position="109"/>
    </location>
</feature>
<feature type="compositionally biased region" description="Polar residues" evidence="3">
    <location>
        <begin position="72"/>
        <end position="81"/>
    </location>
</feature>
<feature type="compositionally biased region" description="Basic residues" evidence="3">
    <location>
        <begin position="95"/>
        <end position="109"/>
    </location>
</feature>
<feature type="modified residue" description="N-acetylalanine" evidence="1">
    <location>
        <position position="2"/>
    </location>
</feature>
<feature type="modified residue" description="Phosphoserine" evidence="1">
    <location>
        <position position="20"/>
    </location>
</feature>
<feature type="modified residue" description="Phosphoserine" evidence="1">
    <location>
        <position position="73"/>
    </location>
</feature>
<feature type="modified residue" description="Phosphoserine" evidence="5">
    <location>
        <position position="189"/>
    </location>
</feature>
<comment type="function">
    <text evidence="1">Translation regulator forming a complex with MCTS1 to promote translation reinitiation. Translation reinitiation is the process where the small ribosomal subunit remains attached to the mRNA following termination of translation of a regulatory upstream ORF (uORF), and resume scanning on the same mRNA molecule to initiate translation of a downstream ORF, usually the main ORF (mORF). The MCTS1/DENR complex is pivotal to two linked mechanisms essential for translation reinitiation. Firstly, the dissociation of deacylated tRNAs from post-termination 40S ribosomal complexes during ribosome recycling. Secondly, the recruitment in an EIF2-independent manner of aminoacylated initiator tRNA to P site of 40S ribosomes for a new round of translation. This regulatory mechanism governs the translation of more than 150 genes which translation reinitiation is MCTS1/DENR complex-dependent.</text>
</comment>
<comment type="subunit">
    <text evidence="1">Interacts with MCTS1 (via PUA domain); the complex regulates translation reinitiation.</text>
</comment>
<comment type="subcellular location">
    <subcellularLocation>
        <location evidence="1">Cytoplasm</location>
    </subcellularLocation>
</comment>
<comment type="similarity">
    <text evidence="4">Belongs to the DENR family.</text>
</comment>
<evidence type="ECO:0000250" key="1">
    <source>
        <dbReference type="UniProtKB" id="O43583"/>
    </source>
</evidence>
<evidence type="ECO:0000255" key="2">
    <source>
        <dbReference type="PROSITE-ProRule" id="PRU00200"/>
    </source>
</evidence>
<evidence type="ECO:0000256" key="3">
    <source>
        <dbReference type="SAM" id="MobiDB-lite"/>
    </source>
</evidence>
<evidence type="ECO:0000305" key="4"/>
<evidence type="ECO:0007744" key="5">
    <source>
    </source>
</evidence>
<organism>
    <name type="scientific">Mus musculus</name>
    <name type="common">Mouse</name>
    <dbReference type="NCBI Taxonomy" id="10090"/>
    <lineage>
        <taxon>Eukaryota</taxon>
        <taxon>Metazoa</taxon>
        <taxon>Chordata</taxon>
        <taxon>Craniata</taxon>
        <taxon>Vertebrata</taxon>
        <taxon>Euteleostomi</taxon>
        <taxon>Mammalia</taxon>
        <taxon>Eutheria</taxon>
        <taxon>Euarchontoglires</taxon>
        <taxon>Glires</taxon>
        <taxon>Rodentia</taxon>
        <taxon>Myomorpha</taxon>
        <taxon>Muroidea</taxon>
        <taxon>Muridae</taxon>
        <taxon>Murinae</taxon>
        <taxon>Mus</taxon>
        <taxon>Mus</taxon>
    </lineage>
</organism>
<gene>
    <name type="primary">Denr</name>
</gene>
<accession>Q9CQJ6</accession>
<accession>Q3UXY1</accession>
<protein>
    <recommendedName>
        <fullName>Density-regulated protein</fullName>
        <shortName>DRP</shortName>
    </recommendedName>
</protein>
<reference key="1">
    <citation type="journal article" date="2005" name="Science">
        <title>The transcriptional landscape of the mammalian genome.</title>
        <authorList>
            <person name="Carninci P."/>
            <person name="Kasukawa T."/>
            <person name="Katayama S."/>
            <person name="Gough J."/>
            <person name="Frith M.C."/>
            <person name="Maeda N."/>
            <person name="Oyama R."/>
            <person name="Ravasi T."/>
            <person name="Lenhard B."/>
            <person name="Wells C."/>
            <person name="Kodzius R."/>
            <person name="Shimokawa K."/>
            <person name="Bajic V.B."/>
            <person name="Brenner S.E."/>
            <person name="Batalov S."/>
            <person name="Forrest A.R."/>
            <person name="Zavolan M."/>
            <person name="Davis M.J."/>
            <person name="Wilming L.G."/>
            <person name="Aidinis V."/>
            <person name="Allen J.E."/>
            <person name="Ambesi-Impiombato A."/>
            <person name="Apweiler R."/>
            <person name="Aturaliya R.N."/>
            <person name="Bailey T.L."/>
            <person name="Bansal M."/>
            <person name="Baxter L."/>
            <person name="Beisel K.W."/>
            <person name="Bersano T."/>
            <person name="Bono H."/>
            <person name="Chalk A.M."/>
            <person name="Chiu K.P."/>
            <person name="Choudhary V."/>
            <person name="Christoffels A."/>
            <person name="Clutterbuck D.R."/>
            <person name="Crowe M.L."/>
            <person name="Dalla E."/>
            <person name="Dalrymple B.P."/>
            <person name="de Bono B."/>
            <person name="Della Gatta G."/>
            <person name="di Bernardo D."/>
            <person name="Down T."/>
            <person name="Engstrom P."/>
            <person name="Fagiolini M."/>
            <person name="Faulkner G."/>
            <person name="Fletcher C.F."/>
            <person name="Fukushima T."/>
            <person name="Furuno M."/>
            <person name="Futaki S."/>
            <person name="Gariboldi M."/>
            <person name="Georgii-Hemming P."/>
            <person name="Gingeras T.R."/>
            <person name="Gojobori T."/>
            <person name="Green R.E."/>
            <person name="Gustincich S."/>
            <person name="Harbers M."/>
            <person name="Hayashi Y."/>
            <person name="Hensch T.K."/>
            <person name="Hirokawa N."/>
            <person name="Hill D."/>
            <person name="Huminiecki L."/>
            <person name="Iacono M."/>
            <person name="Ikeo K."/>
            <person name="Iwama A."/>
            <person name="Ishikawa T."/>
            <person name="Jakt M."/>
            <person name="Kanapin A."/>
            <person name="Katoh M."/>
            <person name="Kawasawa Y."/>
            <person name="Kelso J."/>
            <person name="Kitamura H."/>
            <person name="Kitano H."/>
            <person name="Kollias G."/>
            <person name="Krishnan S.P."/>
            <person name="Kruger A."/>
            <person name="Kummerfeld S.K."/>
            <person name="Kurochkin I.V."/>
            <person name="Lareau L.F."/>
            <person name="Lazarevic D."/>
            <person name="Lipovich L."/>
            <person name="Liu J."/>
            <person name="Liuni S."/>
            <person name="McWilliam S."/>
            <person name="Madan Babu M."/>
            <person name="Madera M."/>
            <person name="Marchionni L."/>
            <person name="Matsuda H."/>
            <person name="Matsuzawa S."/>
            <person name="Miki H."/>
            <person name="Mignone F."/>
            <person name="Miyake S."/>
            <person name="Morris K."/>
            <person name="Mottagui-Tabar S."/>
            <person name="Mulder N."/>
            <person name="Nakano N."/>
            <person name="Nakauchi H."/>
            <person name="Ng P."/>
            <person name="Nilsson R."/>
            <person name="Nishiguchi S."/>
            <person name="Nishikawa S."/>
            <person name="Nori F."/>
            <person name="Ohara O."/>
            <person name="Okazaki Y."/>
            <person name="Orlando V."/>
            <person name="Pang K.C."/>
            <person name="Pavan W.J."/>
            <person name="Pavesi G."/>
            <person name="Pesole G."/>
            <person name="Petrovsky N."/>
            <person name="Piazza S."/>
            <person name="Reed J."/>
            <person name="Reid J.F."/>
            <person name="Ring B.Z."/>
            <person name="Ringwald M."/>
            <person name="Rost B."/>
            <person name="Ruan Y."/>
            <person name="Salzberg S.L."/>
            <person name="Sandelin A."/>
            <person name="Schneider C."/>
            <person name="Schoenbach C."/>
            <person name="Sekiguchi K."/>
            <person name="Semple C.A."/>
            <person name="Seno S."/>
            <person name="Sessa L."/>
            <person name="Sheng Y."/>
            <person name="Shibata Y."/>
            <person name="Shimada H."/>
            <person name="Shimada K."/>
            <person name="Silva D."/>
            <person name="Sinclair B."/>
            <person name="Sperling S."/>
            <person name="Stupka E."/>
            <person name="Sugiura K."/>
            <person name="Sultana R."/>
            <person name="Takenaka Y."/>
            <person name="Taki K."/>
            <person name="Tammoja K."/>
            <person name="Tan S.L."/>
            <person name="Tang S."/>
            <person name="Taylor M.S."/>
            <person name="Tegner J."/>
            <person name="Teichmann S.A."/>
            <person name="Ueda H.R."/>
            <person name="van Nimwegen E."/>
            <person name="Verardo R."/>
            <person name="Wei C.L."/>
            <person name="Yagi K."/>
            <person name="Yamanishi H."/>
            <person name="Zabarovsky E."/>
            <person name="Zhu S."/>
            <person name="Zimmer A."/>
            <person name="Hide W."/>
            <person name="Bult C."/>
            <person name="Grimmond S.M."/>
            <person name="Teasdale R.D."/>
            <person name="Liu E.T."/>
            <person name="Brusic V."/>
            <person name="Quackenbush J."/>
            <person name="Wahlestedt C."/>
            <person name="Mattick J.S."/>
            <person name="Hume D.A."/>
            <person name="Kai C."/>
            <person name="Sasaki D."/>
            <person name="Tomaru Y."/>
            <person name="Fukuda S."/>
            <person name="Kanamori-Katayama M."/>
            <person name="Suzuki M."/>
            <person name="Aoki J."/>
            <person name="Arakawa T."/>
            <person name="Iida J."/>
            <person name="Imamura K."/>
            <person name="Itoh M."/>
            <person name="Kato T."/>
            <person name="Kawaji H."/>
            <person name="Kawagashira N."/>
            <person name="Kawashima T."/>
            <person name="Kojima M."/>
            <person name="Kondo S."/>
            <person name="Konno H."/>
            <person name="Nakano K."/>
            <person name="Ninomiya N."/>
            <person name="Nishio T."/>
            <person name="Okada M."/>
            <person name="Plessy C."/>
            <person name="Shibata K."/>
            <person name="Shiraki T."/>
            <person name="Suzuki S."/>
            <person name="Tagami M."/>
            <person name="Waki K."/>
            <person name="Watahiki A."/>
            <person name="Okamura-Oho Y."/>
            <person name="Suzuki H."/>
            <person name="Kawai J."/>
            <person name="Hayashizaki Y."/>
        </authorList>
    </citation>
    <scope>NUCLEOTIDE SEQUENCE [LARGE SCALE MRNA]</scope>
    <source>
        <strain>C57BL/6J</strain>
        <tissue>Cerebellum</tissue>
        <tissue>Embryo</tissue>
    </source>
</reference>
<reference key="2">
    <citation type="journal article" date="2004" name="Genome Res.">
        <title>The status, quality, and expansion of the NIH full-length cDNA project: the Mammalian Gene Collection (MGC).</title>
        <authorList>
            <consortium name="The MGC Project Team"/>
        </authorList>
    </citation>
    <scope>NUCLEOTIDE SEQUENCE [LARGE SCALE MRNA]</scope>
    <source>
        <strain>FVB/N-3</strain>
        <tissue>Mammary tumor</tissue>
    </source>
</reference>
<reference key="3">
    <citation type="journal article" date="2010" name="Cell">
        <title>A tissue-specific atlas of mouse protein phosphorylation and expression.</title>
        <authorList>
            <person name="Huttlin E.L."/>
            <person name="Jedrychowski M.P."/>
            <person name="Elias J.E."/>
            <person name="Goswami T."/>
            <person name="Rad R."/>
            <person name="Beausoleil S.A."/>
            <person name="Villen J."/>
            <person name="Haas W."/>
            <person name="Sowa M.E."/>
            <person name="Gygi S.P."/>
        </authorList>
    </citation>
    <scope>PHOSPHORYLATION [LARGE SCALE ANALYSIS] AT SER-189</scope>
    <scope>IDENTIFICATION BY MASS SPECTROMETRY [LARGE SCALE ANALYSIS]</scope>
    <source>
        <tissue>Brain</tissue>
        <tissue>Brown adipose tissue</tissue>
        <tissue>Heart</tissue>
        <tissue>Kidney</tissue>
        <tissue>Liver</tissue>
        <tissue>Lung</tissue>
        <tissue>Pancreas</tissue>
        <tissue>Spleen</tissue>
        <tissue>Testis</tissue>
    </source>
</reference>